<comment type="function">
    <text evidence="1">Binds long-chain acyl-coenzyme A molecules with a strong preference for unsaturated C18:1-CoA, lower affinity for unsaturated C20:4-CoA, and very weak affinity for saturated C16:0-CoA. Does not bind fatty acids (By similarity).</text>
</comment>
<comment type="subunit">
    <text evidence="1">Monomer.</text>
</comment>
<comment type="subcellular location">
    <subcellularLocation>
        <location evidence="1">Cytoplasm</location>
    </subcellularLocation>
</comment>
<sequence>MASSFLPSGATTGDSGGELSSGDDSGDVESLQSPKIEASRSLPELFEKAAEHLQGLVQVASREQLLYLYARYKQVKVGNCNTPKPSFFDFEGKQKWEAWKALGDSSPSQAMQEYIAVVKKLDPSWNPQSPEKKGKEANTGFGGPVVSSLYHEEIIREEDKDIFDYCRENNIDHITKVIKTKNMDVNMKDEEGRTLLHWACDRGHKELVTVLLQYRADINCQDNEGQTALHYAAACEFLDIVELLLQSGADPTLRDQDGCLPEEVTGCKAVTLMLQQHTTGKA</sequence>
<protein>
    <recommendedName>
        <fullName>Acyl-CoA-binding domain-containing protein 6</fullName>
    </recommendedName>
</protein>
<reference key="1">
    <citation type="submission" date="2007-02" db="EMBL/GenBank/DDBJ databases">
        <authorList>
            <consortium name="NIH - Mammalian Gene Collection (MGC) project"/>
        </authorList>
    </citation>
    <scope>NUCLEOTIDE SEQUENCE [LARGE SCALE MRNA]</scope>
    <source>
        <strain>Hereford</strain>
        <tissue>Fetal skin</tissue>
    </source>
</reference>
<keyword id="KW-0040">ANK repeat</keyword>
<keyword id="KW-0963">Cytoplasm</keyword>
<keyword id="KW-0446">Lipid-binding</keyword>
<keyword id="KW-0597">Phosphoprotein</keyword>
<keyword id="KW-1185">Reference proteome</keyword>
<keyword id="KW-0677">Repeat</keyword>
<accession>A2VDR2</accession>
<organism>
    <name type="scientific">Bos taurus</name>
    <name type="common">Bovine</name>
    <dbReference type="NCBI Taxonomy" id="9913"/>
    <lineage>
        <taxon>Eukaryota</taxon>
        <taxon>Metazoa</taxon>
        <taxon>Chordata</taxon>
        <taxon>Craniata</taxon>
        <taxon>Vertebrata</taxon>
        <taxon>Euteleostomi</taxon>
        <taxon>Mammalia</taxon>
        <taxon>Eutheria</taxon>
        <taxon>Laurasiatheria</taxon>
        <taxon>Artiodactyla</taxon>
        <taxon>Ruminantia</taxon>
        <taxon>Pecora</taxon>
        <taxon>Bovidae</taxon>
        <taxon>Bovinae</taxon>
        <taxon>Bos</taxon>
    </lineage>
</organism>
<proteinExistence type="evidence at transcript level"/>
<evidence type="ECO:0000250" key="1"/>
<evidence type="ECO:0000250" key="2">
    <source>
        <dbReference type="UniProtKB" id="Q5RJK8"/>
    </source>
</evidence>
<evidence type="ECO:0000250" key="3">
    <source>
        <dbReference type="UniProtKB" id="Q9BR61"/>
    </source>
</evidence>
<evidence type="ECO:0000255" key="4">
    <source>
        <dbReference type="PROSITE-ProRule" id="PRU00573"/>
    </source>
</evidence>
<evidence type="ECO:0000256" key="5">
    <source>
        <dbReference type="SAM" id="MobiDB-lite"/>
    </source>
</evidence>
<dbReference type="EMBL" id="BC133362">
    <property type="protein sequence ID" value="AAI33363.1"/>
    <property type="molecule type" value="mRNA"/>
</dbReference>
<dbReference type="RefSeq" id="NP_001077252.1">
    <property type="nucleotide sequence ID" value="NM_001083783.1"/>
</dbReference>
<dbReference type="SMR" id="A2VDR2"/>
<dbReference type="FunCoup" id="A2VDR2">
    <property type="interactions" value="3702"/>
</dbReference>
<dbReference type="STRING" id="9913.ENSBTAP00000055381"/>
<dbReference type="PaxDb" id="9913-ENSBTAP00000055381"/>
<dbReference type="GeneID" id="618245"/>
<dbReference type="KEGG" id="bta:618245"/>
<dbReference type="CTD" id="84320"/>
<dbReference type="eggNOG" id="KOG0817">
    <property type="taxonomic scope" value="Eukaryota"/>
</dbReference>
<dbReference type="HOGENOM" id="CLU_050309_4_0_1"/>
<dbReference type="InParanoid" id="A2VDR2"/>
<dbReference type="OrthoDB" id="10254927at2759"/>
<dbReference type="Proteomes" id="UP000009136">
    <property type="component" value="Unplaced"/>
</dbReference>
<dbReference type="GO" id="GO:0005737">
    <property type="term" value="C:cytoplasm"/>
    <property type="evidence" value="ECO:0007669"/>
    <property type="project" value="UniProtKB-SubCell"/>
</dbReference>
<dbReference type="GO" id="GO:0000062">
    <property type="term" value="F:fatty-acyl-CoA binding"/>
    <property type="evidence" value="ECO:0000318"/>
    <property type="project" value="GO_Central"/>
</dbReference>
<dbReference type="FunFam" id="1.20.80.10:FF:000022">
    <property type="entry name" value="acyl-CoA-binding domain-containing protein 6 isoform X1"/>
    <property type="match status" value="1"/>
</dbReference>
<dbReference type="Gene3D" id="1.20.80.10">
    <property type="match status" value="1"/>
</dbReference>
<dbReference type="Gene3D" id="1.25.40.20">
    <property type="entry name" value="Ankyrin repeat-containing domain"/>
    <property type="match status" value="1"/>
</dbReference>
<dbReference type="InterPro" id="IPR000582">
    <property type="entry name" value="Acyl-CoA-binding_protein"/>
</dbReference>
<dbReference type="InterPro" id="IPR035984">
    <property type="entry name" value="Acyl-CoA-binding_sf"/>
</dbReference>
<dbReference type="InterPro" id="IPR002110">
    <property type="entry name" value="Ankyrin_rpt"/>
</dbReference>
<dbReference type="InterPro" id="IPR036770">
    <property type="entry name" value="Ankyrin_rpt-contain_sf"/>
</dbReference>
<dbReference type="InterPro" id="IPR014352">
    <property type="entry name" value="FERM/acyl-CoA-bd_prot_sf"/>
</dbReference>
<dbReference type="PANTHER" id="PTHR24119">
    <property type="entry name" value="ACYL-COA-BINDING DOMAIN-CONTAINING PROTEIN 6"/>
    <property type="match status" value="1"/>
</dbReference>
<dbReference type="PANTHER" id="PTHR24119:SF0">
    <property type="entry name" value="ACYL-COA-BINDING DOMAIN-CONTAINING PROTEIN 6"/>
    <property type="match status" value="1"/>
</dbReference>
<dbReference type="Pfam" id="PF00887">
    <property type="entry name" value="ACBP"/>
    <property type="match status" value="1"/>
</dbReference>
<dbReference type="Pfam" id="PF12796">
    <property type="entry name" value="Ank_2"/>
    <property type="match status" value="1"/>
</dbReference>
<dbReference type="PRINTS" id="PR00689">
    <property type="entry name" value="ACOABINDINGP"/>
</dbReference>
<dbReference type="PRINTS" id="PR01415">
    <property type="entry name" value="ANKYRIN"/>
</dbReference>
<dbReference type="SMART" id="SM00248">
    <property type="entry name" value="ANK"/>
    <property type="match status" value="2"/>
</dbReference>
<dbReference type="SUPFAM" id="SSF47027">
    <property type="entry name" value="Acyl-CoA binding protein"/>
    <property type="match status" value="1"/>
</dbReference>
<dbReference type="SUPFAM" id="SSF48403">
    <property type="entry name" value="Ankyrin repeat"/>
    <property type="match status" value="1"/>
</dbReference>
<dbReference type="PROSITE" id="PS51228">
    <property type="entry name" value="ACB_2"/>
    <property type="match status" value="1"/>
</dbReference>
<dbReference type="PROSITE" id="PS50297">
    <property type="entry name" value="ANK_REP_REGION"/>
    <property type="match status" value="1"/>
</dbReference>
<dbReference type="PROSITE" id="PS50088">
    <property type="entry name" value="ANK_REPEAT"/>
    <property type="match status" value="2"/>
</dbReference>
<name>ACBD6_BOVIN</name>
<gene>
    <name type="primary">ACBD6</name>
</gene>
<feature type="chain" id="PRO_0000361278" description="Acyl-CoA-binding domain-containing protein 6">
    <location>
        <begin position="1"/>
        <end position="282"/>
    </location>
</feature>
<feature type="domain" description="ACB" evidence="4">
    <location>
        <begin position="42"/>
        <end position="127"/>
    </location>
</feature>
<feature type="repeat" description="ANK 1">
    <location>
        <begin position="191"/>
        <end position="220"/>
    </location>
</feature>
<feature type="repeat" description="ANK 2">
    <location>
        <begin position="224"/>
        <end position="253"/>
    </location>
</feature>
<feature type="region of interest" description="Disordered" evidence="5">
    <location>
        <begin position="1"/>
        <end position="34"/>
    </location>
</feature>
<feature type="compositionally biased region" description="Polar residues" evidence="5">
    <location>
        <begin position="1"/>
        <end position="12"/>
    </location>
</feature>
<feature type="compositionally biased region" description="Low complexity" evidence="5">
    <location>
        <begin position="17"/>
        <end position="31"/>
    </location>
</feature>
<feature type="binding site" evidence="1">
    <location>
        <begin position="69"/>
        <end position="73"/>
    </location>
    <ligand>
        <name>an acyl-CoA</name>
        <dbReference type="ChEBI" id="CHEBI:58342"/>
    </ligand>
</feature>
<feature type="binding site" evidence="1">
    <location>
        <position position="95"/>
    </location>
    <ligand>
        <name>an acyl-CoA</name>
        <dbReference type="ChEBI" id="CHEBI:58342"/>
    </ligand>
</feature>
<feature type="binding site" evidence="1">
    <location>
        <position position="114"/>
    </location>
    <ligand>
        <name>an acyl-CoA</name>
        <dbReference type="ChEBI" id="CHEBI:58342"/>
    </ligand>
</feature>
<feature type="modified residue" description="Phosphoserine" evidence="2">
    <location>
        <position position="41"/>
    </location>
</feature>
<feature type="modified residue" description="Phosphoserine" evidence="3">
    <location>
        <position position="106"/>
    </location>
</feature>